<comment type="function">
    <text evidence="1">May be involved in vacuolar sorting and osmoregulation.</text>
</comment>
<comment type="cofactor">
    <cofactor evidence="2">
        <name>Zn(2+)</name>
        <dbReference type="ChEBI" id="CHEBI:29105"/>
    </cofactor>
    <text evidence="2">Binds 2 Zn(2+) ions per subunit.</text>
</comment>
<comment type="subcellular location">
    <subcellularLocation>
        <location evidence="1">Vacuole membrane</location>
        <topology evidence="3">Multi-pass membrane protein</topology>
    </subcellularLocation>
</comment>
<comment type="similarity">
    <text evidence="6">Belongs to the peptidase M28 family.</text>
</comment>
<dbReference type="EC" id="3.4.-.-" evidence="6"/>
<dbReference type="EMBL" id="CH981526">
    <property type="protein sequence ID" value="EDK44436.1"/>
    <property type="molecule type" value="Genomic_DNA"/>
</dbReference>
<dbReference type="RefSeq" id="XP_001526057.1">
    <property type="nucleotide sequence ID" value="XM_001526007.1"/>
</dbReference>
<dbReference type="SMR" id="A5DZ28"/>
<dbReference type="FunCoup" id="A5DZ28">
    <property type="interactions" value="6"/>
</dbReference>
<dbReference type="GeneID" id="5233296"/>
<dbReference type="KEGG" id="lel:PVL30_003462"/>
<dbReference type="VEuPathDB" id="FungiDB:LELG_02615"/>
<dbReference type="eggNOG" id="KOG2194">
    <property type="taxonomic scope" value="Eukaryota"/>
</dbReference>
<dbReference type="HOGENOM" id="CLU_006412_1_0_1"/>
<dbReference type="InParanoid" id="A5DZ28"/>
<dbReference type="OMA" id="TPWPVTI"/>
<dbReference type="OrthoDB" id="76293at2759"/>
<dbReference type="Proteomes" id="UP000001996">
    <property type="component" value="Unassembled WGS sequence"/>
</dbReference>
<dbReference type="GO" id="GO:0005774">
    <property type="term" value="C:vacuolar membrane"/>
    <property type="evidence" value="ECO:0007669"/>
    <property type="project" value="UniProtKB-SubCell"/>
</dbReference>
<dbReference type="GO" id="GO:0046872">
    <property type="term" value="F:metal ion binding"/>
    <property type="evidence" value="ECO:0007669"/>
    <property type="project" value="UniProtKB-KW"/>
</dbReference>
<dbReference type="GO" id="GO:0008235">
    <property type="term" value="F:metalloexopeptidase activity"/>
    <property type="evidence" value="ECO:0007669"/>
    <property type="project" value="InterPro"/>
</dbReference>
<dbReference type="GO" id="GO:0006508">
    <property type="term" value="P:proteolysis"/>
    <property type="evidence" value="ECO:0007669"/>
    <property type="project" value="UniProtKB-KW"/>
</dbReference>
<dbReference type="CDD" id="cd03875">
    <property type="entry name" value="M28_Fxna_like"/>
    <property type="match status" value="1"/>
</dbReference>
<dbReference type="FunFam" id="3.40.630.10:FF:000057">
    <property type="entry name" value="Vacuolar membrane protease"/>
    <property type="match status" value="1"/>
</dbReference>
<dbReference type="Gene3D" id="3.40.630.10">
    <property type="entry name" value="Zn peptidases"/>
    <property type="match status" value="1"/>
</dbReference>
<dbReference type="InterPro" id="IPR048024">
    <property type="entry name" value="Fxna-like_M28_dom"/>
</dbReference>
<dbReference type="InterPro" id="IPR045175">
    <property type="entry name" value="M28_fam"/>
</dbReference>
<dbReference type="InterPro" id="IPR007484">
    <property type="entry name" value="Peptidase_M28"/>
</dbReference>
<dbReference type="InterPro" id="IPR053975">
    <property type="entry name" value="PFF1_C"/>
</dbReference>
<dbReference type="InterPro" id="IPR053976">
    <property type="entry name" value="PFF1_TM"/>
</dbReference>
<dbReference type="PANTHER" id="PTHR12147">
    <property type="entry name" value="METALLOPEPTIDASE M28 FAMILY MEMBER"/>
    <property type="match status" value="1"/>
</dbReference>
<dbReference type="PANTHER" id="PTHR12147:SF58">
    <property type="entry name" value="VACUOLAR MEMBRANE PROTEASE"/>
    <property type="match status" value="1"/>
</dbReference>
<dbReference type="Pfam" id="PF04389">
    <property type="entry name" value="Peptidase_M28"/>
    <property type="match status" value="1"/>
</dbReference>
<dbReference type="Pfam" id="PF22250">
    <property type="entry name" value="PFF1_C"/>
    <property type="match status" value="1"/>
</dbReference>
<dbReference type="Pfam" id="PF22251">
    <property type="entry name" value="PFF1_TM"/>
    <property type="match status" value="1"/>
</dbReference>
<dbReference type="SUPFAM" id="SSF53187">
    <property type="entry name" value="Zn-dependent exopeptidases"/>
    <property type="match status" value="1"/>
</dbReference>
<name>PFF1_LODEL</name>
<organism>
    <name type="scientific">Lodderomyces elongisporus (strain ATCC 11503 / CBS 2605 / JCM 1781 / NBRC 1676 / NRRL YB-4239)</name>
    <name type="common">Yeast</name>
    <name type="synonym">Saccharomyces elongisporus</name>
    <dbReference type="NCBI Taxonomy" id="379508"/>
    <lineage>
        <taxon>Eukaryota</taxon>
        <taxon>Fungi</taxon>
        <taxon>Dikarya</taxon>
        <taxon>Ascomycota</taxon>
        <taxon>Saccharomycotina</taxon>
        <taxon>Pichiomycetes</taxon>
        <taxon>Debaryomycetaceae</taxon>
        <taxon>Candida/Lodderomyces clade</taxon>
        <taxon>Lodderomyces</taxon>
    </lineage>
</organism>
<protein>
    <recommendedName>
        <fullName evidence="1">Vacuolar membrane protease</fullName>
        <ecNumber evidence="6">3.4.-.-</ecNumber>
    </recommendedName>
    <alternativeName>
        <fullName evidence="1">FXNA-related family protease 1</fullName>
    </alternativeName>
</protein>
<proteinExistence type="inferred from homology"/>
<feature type="chain" id="PRO_0000411721" description="Vacuolar membrane protease">
    <location>
        <begin position="1"/>
        <end position="960"/>
    </location>
</feature>
<feature type="topological domain" description="Cytoplasmic" evidence="1">
    <location>
        <begin position="1"/>
        <end position="57"/>
    </location>
</feature>
<feature type="transmembrane region" description="Helical; Name=1" evidence="3">
    <location>
        <begin position="58"/>
        <end position="78"/>
    </location>
</feature>
<feature type="topological domain" description="Vacuolar" evidence="1">
    <location>
        <begin position="79"/>
        <end position="401"/>
    </location>
</feature>
<feature type="transmembrane region" description="Helical; Name=2" evidence="3">
    <location>
        <begin position="402"/>
        <end position="422"/>
    </location>
</feature>
<feature type="topological domain" description="Cytoplasmic" evidence="1">
    <location>
        <begin position="423"/>
        <end position="432"/>
    </location>
</feature>
<feature type="transmembrane region" description="Helical; Name=3" evidence="3">
    <location>
        <begin position="433"/>
        <end position="453"/>
    </location>
</feature>
<feature type="topological domain" description="Vacuolar" evidence="1">
    <location>
        <begin position="454"/>
        <end position="476"/>
    </location>
</feature>
<feature type="transmembrane region" description="Helical; Name=4" evidence="3">
    <location>
        <begin position="477"/>
        <end position="497"/>
    </location>
</feature>
<feature type="topological domain" description="Cytoplasmic" evidence="1">
    <location>
        <begin position="498"/>
        <end position="502"/>
    </location>
</feature>
<feature type="transmembrane region" description="Helical; Name=5" evidence="3">
    <location>
        <begin position="503"/>
        <end position="523"/>
    </location>
</feature>
<feature type="topological domain" description="Vacuolar" evidence="1">
    <location>
        <begin position="524"/>
        <end position="535"/>
    </location>
</feature>
<feature type="transmembrane region" description="Helical; Name=6" evidence="3">
    <location>
        <begin position="536"/>
        <end position="556"/>
    </location>
</feature>
<feature type="topological domain" description="Cytoplasmic" evidence="1">
    <location>
        <begin position="557"/>
        <end position="635"/>
    </location>
</feature>
<feature type="transmembrane region" description="Helical; Name=7" evidence="3">
    <location>
        <begin position="636"/>
        <end position="656"/>
    </location>
</feature>
<feature type="topological domain" description="Vacuolar" evidence="1">
    <location>
        <begin position="657"/>
        <end position="668"/>
    </location>
</feature>
<feature type="transmembrane region" description="Helical; Name=8" evidence="3">
    <location>
        <begin position="669"/>
        <end position="689"/>
    </location>
</feature>
<feature type="topological domain" description="Cytoplasmic" evidence="1">
    <location>
        <begin position="690"/>
        <end position="696"/>
    </location>
</feature>
<feature type="transmembrane region" description="Helical; Name=9" evidence="3">
    <location>
        <begin position="697"/>
        <end position="717"/>
    </location>
</feature>
<feature type="topological domain" description="Vacuolar" evidence="1">
    <location>
        <begin position="718"/>
        <end position="960"/>
    </location>
</feature>
<feature type="region of interest" description="Disordered" evidence="5">
    <location>
        <begin position="22"/>
        <end position="41"/>
    </location>
</feature>
<feature type="region of interest" description="Disordered" evidence="5">
    <location>
        <begin position="587"/>
        <end position="614"/>
    </location>
</feature>
<feature type="compositionally biased region" description="Low complexity" evidence="5">
    <location>
        <begin position="24"/>
        <end position="33"/>
    </location>
</feature>
<feature type="compositionally biased region" description="Basic and acidic residues" evidence="5">
    <location>
        <begin position="587"/>
        <end position="605"/>
    </location>
</feature>
<feature type="active site" description="Proton acceptor" evidence="2">
    <location>
        <position position="235"/>
    </location>
</feature>
<feature type="binding site" evidence="2">
    <location>
        <position position="189"/>
    </location>
    <ligand>
        <name>Zn(2+)</name>
        <dbReference type="ChEBI" id="CHEBI:29105"/>
        <label>1</label>
        <note>catalytic</note>
    </ligand>
</feature>
<feature type="binding site" evidence="2">
    <location>
        <position position="201"/>
    </location>
    <ligand>
        <name>Zn(2+)</name>
        <dbReference type="ChEBI" id="CHEBI:29105"/>
        <label>1</label>
        <note>catalytic</note>
    </ligand>
</feature>
<feature type="binding site" evidence="2">
    <location>
        <position position="201"/>
    </location>
    <ligand>
        <name>Zn(2+)</name>
        <dbReference type="ChEBI" id="CHEBI:29105"/>
        <label>2</label>
        <note>catalytic</note>
    </ligand>
</feature>
<feature type="binding site" evidence="2">
    <location>
        <position position="236"/>
    </location>
    <ligand>
        <name>Zn(2+)</name>
        <dbReference type="ChEBI" id="CHEBI:29105"/>
        <label>2</label>
        <note>catalytic</note>
    </ligand>
</feature>
<feature type="binding site" evidence="2">
    <location>
        <position position="261"/>
    </location>
    <ligand>
        <name>Zn(2+)</name>
        <dbReference type="ChEBI" id="CHEBI:29105"/>
        <label>1</label>
        <note>catalytic</note>
    </ligand>
</feature>
<feature type="binding site" evidence="2">
    <location>
        <position position="333"/>
    </location>
    <ligand>
        <name>Zn(2+)</name>
        <dbReference type="ChEBI" id="CHEBI:29105"/>
        <label>2</label>
        <note>catalytic</note>
    </ligand>
</feature>
<feature type="site" description="Transition state stabilizer" evidence="2">
    <location>
        <position position="332"/>
    </location>
</feature>
<feature type="glycosylation site" description="N-linked (GlcNAc...) asparagine" evidence="4">
    <location>
        <position position="148"/>
    </location>
</feature>
<feature type="glycosylation site" description="N-linked (GlcNAc...) asparagine" evidence="4">
    <location>
        <position position="657"/>
    </location>
</feature>
<feature type="glycosylation site" description="N-linked (GlcNAc...) asparagine" evidence="4">
    <location>
        <position position="736"/>
    </location>
</feature>
<feature type="glycosylation site" description="N-linked (GlcNAc...) asparagine" evidence="4">
    <location>
        <position position="763"/>
    </location>
</feature>
<feature type="glycosylation site" description="N-linked (GlcNAc...) asparagine" evidence="4">
    <location>
        <position position="803"/>
    </location>
</feature>
<feature type="glycosylation site" description="N-linked (GlcNAc...) asparagine" evidence="4">
    <location>
        <position position="875"/>
    </location>
</feature>
<feature type="glycosylation site" description="N-linked (GlcNAc...) asparagine" evidence="4">
    <location>
        <position position="921"/>
    </location>
</feature>
<gene>
    <name type="ORF">LELG_02615</name>
</gene>
<sequence>MADNNSSSGSLVIDEQDYDVHEAGQQGQQGQQKHQQRQQERPSLITRVFRSVFGYRKTSLSLFVVATIALCVSLSYIDNSVDFISFPTVESEVNLLNAAWLDLQVIAKEQHPYGSIGNDRVHDFLERRIQELITGANFITWDNDINGNNSFMFESSSNPKTVSYYESNNLLVKIEGKNAKLPGILLSSHFDSVPTSYGVTDDGMGVASMLGILNYFSQQKKQPERTIVMNFNNNEEFGLLGATAFTRHPWFKLVKYFLNLEGTGAGGKAILFRATDYGIAKYFQNVRTPYASSIFQQGFANGLVHSETDYKVYKEAGMRGLDLAFFKPRDYYHTAEDNIRRTSEKSLWHMLSNSLDFIDYLSKDKEFGMNLEEKPNLLEEPAVFASFLNYFFTISTSQLFKINVALLTVFPILNGLLLLYTIRSRKWQVSFSSAISIPVALLVTMFIVVYLVVESYKSFNQYLPSSRPLLLVATITSILLLVFSIILVAFSFFSIIAEENLRLLAIVELSFAYWVGLAFTTHGLSGAESARHSGEFAVSILFTLEAVASFLGLIGWSLCRNRSHLQVAEGESVPLLNGIDARYSSDNDHDHEHRHGHEDNEHGEAHVQQQSQSRHKKQCKETVHSFGYDWSLQYLITVPLSIFIIYNSGWLVLEGVNKTLQESAKAETFVYNLLWIVSVSLVLPLIPFAGKLNRYMVFVLIAIGVLGTLLVHVVQPFNEANPLKLRFLQRIDGKNNASSVHVYARKGLATEVLEQLPSVRQSNETIHCSQLADGMEDCSFVSALAPQILPGYELGNYIEVTNNGSAPSQLFGVNYNQIKIVALKSQSCSLHFGDSKVKAVVVGSSLESAPAFKHLPSGYSFNKDHFYKDTSGIWNLTLNKLDSHSSFDISLYWLPGIDDEANTLQFDVECFWADLSPVALNNTVFEAIPAFNEVQQYSPISVSWANREKGLVAYTKQVHV</sequence>
<reference key="1">
    <citation type="journal article" date="2009" name="Nature">
        <title>Evolution of pathogenicity and sexual reproduction in eight Candida genomes.</title>
        <authorList>
            <person name="Butler G."/>
            <person name="Rasmussen M.D."/>
            <person name="Lin M.F."/>
            <person name="Santos M.A.S."/>
            <person name="Sakthikumar S."/>
            <person name="Munro C.A."/>
            <person name="Rheinbay E."/>
            <person name="Grabherr M."/>
            <person name="Forche A."/>
            <person name="Reedy J.L."/>
            <person name="Agrafioti I."/>
            <person name="Arnaud M.B."/>
            <person name="Bates S."/>
            <person name="Brown A.J.P."/>
            <person name="Brunke S."/>
            <person name="Costanzo M.C."/>
            <person name="Fitzpatrick D.A."/>
            <person name="de Groot P.W.J."/>
            <person name="Harris D."/>
            <person name="Hoyer L.L."/>
            <person name="Hube B."/>
            <person name="Klis F.M."/>
            <person name="Kodira C."/>
            <person name="Lennard N."/>
            <person name="Logue M.E."/>
            <person name="Martin R."/>
            <person name="Neiman A.M."/>
            <person name="Nikolaou E."/>
            <person name="Quail M.A."/>
            <person name="Quinn J."/>
            <person name="Santos M.C."/>
            <person name="Schmitzberger F.F."/>
            <person name="Sherlock G."/>
            <person name="Shah P."/>
            <person name="Silverstein K.A.T."/>
            <person name="Skrzypek M.S."/>
            <person name="Soll D."/>
            <person name="Staggs R."/>
            <person name="Stansfield I."/>
            <person name="Stumpf M.P.H."/>
            <person name="Sudbery P.E."/>
            <person name="Srikantha T."/>
            <person name="Zeng Q."/>
            <person name="Berman J."/>
            <person name="Berriman M."/>
            <person name="Heitman J."/>
            <person name="Gow N.A.R."/>
            <person name="Lorenz M.C."/>
            <person name="Birren B.W."/>
            <person name="Kellis M."/>
            <person name="Cuomo C.A."/>
        </authorList>
    </citation>
    <scope>NUCLEOTIDE SEQUENCE [LARGE SCALE GENOMIC DNA]</scope>
    <source>
        <strain>ATCC 11503 / BCRC 21390 / CBS 2605 / JCM 1781 / NBRC 1676 / NRRL YB-4239</strain>
    </source>
</reference>
<evidence type="ECO:0000250" key="1">
    <source>
        <dbReference type="UniProtKB" id="P38244"/>
    </source>
</evidence>
<evidence type="ECO:0000250" key="2">
    <source>
        <dbReference type="UniProtKB" id="P80561"/>
    </source>
</evidence>
<evidence type="ECO:0000255" key="3"/>
<evidence type="ECO:0000255" key="4">
    <source>
        <dbReference type="PROSITE-ProRule" id="PRU00498"/>
    </source>
</evidence>
<evidence type="ECO:0000256" key="5">
    <source>
        <dbReference type="SAM" id="MobiDB-lite"/>
    </source>
</evidence>
<evidence type="ECO:0000305" key="6"/>
<keyword id="KW-0325">Glycoprotein</keyword>
<keyword id="KW-0378">Hydrolase</keyword>
<keyword id="KW-0472">Membrane</keyword>
<keyword id="KW-0479">Metal-binding</keyword>
<keyword id="KW-0482">Metalloprotease</keyword>
<keyword id="KW-0645">Protease</keyword>
<keyword id="KW-1185">Reference proteome</keyword>
<keyword id="KW-0812">Transmembrane</keyword>
<keyword id="KW-1133">Transmembrane helix</keyword>
<keyword id="KW-0926">Vacuole</keyword>
<keyword id="KW-0862">Zinc</keyword>
<accession>A5DZ28</accession>